<sequence length="93" mass="10269">MKKTLMLLAMVVALVILPFFINHGGEYGGSDGEAESQIQAIAPQYKPWFQPLYEPASGEIESLLFTLQGSLGAAVIFYILGYCKGKQRRDDRA</sequence>
<gene>
    <name evidence="1" type="primary">cbiN</name>
    <name type="ordered locus">SeHA_C2244</name>
</gene>
<proteinExistence type="inferred from homology"/>
<reference key="1">
    <citation type="journal article" date="2011" name="J. Bacteriol.">
        <title>Comparative genomics of 28 Salmonella enterica isolates: evidence for CRISPR-mediated adaptive sublineage evolution.</title>
        <authorList>
            <person name="Fricke W.F."/>
            <person name="Mammel M.K."/>
            <person name="McDermott P.F."/>
            <person name="Tartera C."/>
            <person name="White D.G."/>
            <person name="Leclerc J.E."/>
            <person name="Ravel J."/>
            <person name="Cebula T.A."/>
        </authorList>
    </citation>
    <scope>NUCLEOTIDE SEQUENCE [LARGE SCALE GENOMIC DNA]</scope>
    <source>
        <strain>SL476</strain>
    </source>
</reference>
<keyword id="KW-0997">Cell inner membrane</keyword>
<keyword id="KW-1003">Cell membrane</keyword>
<keyword id="KW-0169">Cobalamin biosynthesis</keyword>
<keyword id="KW-0170">Cobalt</keyword>
<keyword id="KW-0171">Cobalt transport</keyword>
<keyword id="KW-0406">Ion transport</keyword>
<keyword id="KW-0472">Membrane</keyword>
<keyword id="KW-0812">Transmembrane</keyword>
<keyword id="KW-1133">Transmembrane helix</keyword>
<keyword id="KW-0813">Transport</keyword>
<organism>
    <name type="scientific">Salmonella heidelberg (strain SL476)</name>
    <dbReference type="NCBI Taxonomy" id="454169"/>
    <lineage>
        <taxon>Bacteria</taxon>
        <taxon>Pseudomonadati</taxon>
        <taxon>Pseudomonadota</taxon>
        <taxon>Gammaproteobacteria</taxon>
        <taxon>Enterobacterales</taxon>
        <taxon>Enterobacteriaceae</taxon>
        <taxon>Salmonella</taxon>
    </lineage>
</organism>
<name>CBIN_SALHS</name>
<protein>
    <recommendedName>
        <fullName evidence="1">Cobalt transport protein CbiN</fullName>
    </recommendedName>
    <alternativeName>
        <fullName evidence="1">Energy-coupling factor transporter probable substrate-capture protein CbiN</fullName>
        <shortName evidence="1">ECF transporter S component CbiN</shortName>
    </alternativeName>
</protein>
<evidence type="ECO:0000255" key="1">
    <source>
        <dbReference type="HAMAP-Rule" id="MF_00330"/>
    </source>
</evidence>
<feature type="chain" id="PRO_1000116113" description="Cobalt transport protein CbiN">
    <location>
        <begin position="1"/>
        <end position="93"/>
    </location>
</feature>
<feature type="transmembrane region" description="Helical" evidence="1">
    <location>
        <begin position="5"/>
        <end position="25"/>
    </location>
</feature>
<feature type="transmembrane region" description="Helical" evidence="1">
    <location>
        <begin position="63"/>
        <end position="83"/>
    </location>
</feature>
<dbReference type="EMBL" id="CP001120">
    <property type="protein sequence ID" value="ACF67129.1"/>
    <property type="molecule type" value="Genomic_DNA"/>
</dbReference>
<dbReference type="RefSeq" id="WP_000753212.1">
    <property type="nucleotide sequence ID" value="NC_011083.1"/>
</dbReference>
<dbReference type="KEGG" id="seh:SeHA_C2244"/>
<dbReference type="HOGENOM" id="CLU_136197_2_0_6"/>
<dbReference type="UniPathway" id="UPA00148"/>
<dbReference type="Proteomes" id="UP000001866">
    <property type="component" value="Chromosome"/>
</dbReference>
<dbReference type="GO" id="GO:0005886">
    <property type="term" value="C:plasma membrane"/>
    <property type="evidence" value="ECO:0007669"/>
    <property type="project" value="UniProtKB-SubCell"/>
</dbReference>
<dbReference type="GO" id="GO:0015087">
    <property type="term" value="F:cobalt ion transmembrane transporter activity"/>
    <property type="evidence" value="ECO:0007669"/>
    <property type="project" value="UniProtKB-UniRule"/>
</dbReference>
<dbReference type="GO" id="GO:0009236">
    <property type="term" value="P:cobalamin biosynthetic process"/>
    <property type="evidence" value="ECO:0007669"/>
    <property type="project" value="UniProtKB-UniRule"/>
</dbReference>
<dbReference type="HAMAP" id="MF_00330">
    <property type="entry name" value="CbiN"/>
    <property type="match status" value="1"/>
</dbReference>
<dbReference type="InterPro" id="IPR003705">
    <property type="entry name" value="CbiN"/>
</dbReference>
<dbReference type="NCBIfam" id="TIGR01165">
    <property type="entry name" value="cbiN"/>
    <property type="match status" value="1"/>
</dbReference>
<dbReference type="NCBIfam" id="NF002780">
    <property type="entry name" value="PRK02898.1"/>
    <property type="match status" value="1"/>
</dbReference>
<dbReference type="PANTHER" id="PTHR38662">
    <property type="entry name" value="COBALT TRANSPORT PROTEIN CBIN"/>
    <property type="match status" value="1"/>
</dbReference>
<dbReference type="PANTHER" id="PTHR38662:SF1">
    <property type="entry name" value="COBALT TRANSPORT PROTEIN CBIN"/>
    <property type="match status" value="1"/>
</dbReference>
<dbReference type="Pfam" id="PF02553">
    <property type="entry name" value="CbiN"/>
    <property type="match status" value="1"/>
</dbReference>
<accession>B4T8X4</accession>
<comment type="function">
    <text evidence="1">Part of the energy-coupling factor (ECF) transporter complex CbiMNOQ involved in cobalt import.</text>
</comment>
<comment type="pathway">
    <text evidence="1">Cofactor biosynthesis; adenosylcobalamin biosynthesis.</text>
</comment>
<comment type="subunit">
    <text evidence="1">Forms an energy-coupling factor (ECF) transporter complex composed of an ATP-binding protein (A component, CbiO), a transmembrane protein (T component, CbiQ) and 2 possible substrate-capture proteins (S components, CbiM and CbiN) of unknown stoichimetry.</text>
</comment>
<comment type="subcellular location">
    <subcellularLocation>
        <location evidence="1">Cell inner membrane</location>
        <topology evidence="1">Multi-pass membrane protein</topology>
    </subcellularLocation>
</comment>
<comment type="similarity">
    <text evidence="1">Belongs to the CbiN family.</text>
</comment>